<reference key="1">
    <citation type="journal article" date="2007" name="Proc. Natl. Acad. Sci. U.S.A.">
        <title>The genome of Syntrophus aciditrophicus: life at the thermodynamic limit of microbial growth.</title>
        <authorList>
            <person name="McInerney M.J."/>
            <person name="Rohlin L."/>
            <person name="Mouttaki H."/>
            <person name="Kim U."/>
            <person name="Krupp R.S."/>
            <person name="Rios-Hernandez L."/>
            <person name="Sieber J."/>
            <person name="Struchtemeyer C.G."/>
            <person name="Bhattacharyya A."/>
            <person name="Campbell J.W."/>
            <person name="Gunsalus R.P."/>
        </authorList>
    </citation>
    <scope>NUCLEOTIDE SEQUENCE [LARGE SCALE GENOMIC DNA]</scope>
    <source>
        <strain>SB</strain>
    </source>
</reference>
<sequence length="277" mass="31348">MAIISMKQLLEAGVHFGHQTNKWNPKMKPYIFGARNNIYIIDLQQTVGLFQNAYNFVIDTVSEGGEIMFIGTKKQSQDSIHDEATRCGMPYVNQRWLGGMLTNFVTIKKRIDRLNYLDQIFEDDSVRAFPKKEIMGLQKEREKLVKVLGGIQKMKSLPAALFIVDPKRETIAVNEAKKLRIPIIAIVDTNCDPENIDYIIPGNDDAIRAIKLFSSKFADAVTEGKRRYEERLQAETDKDAESSTVQQEENPEADIPESIETKESVSAAADSDLDENE</sequence>
<proteinExistence type="inferred from homology"/>
<keyword id="KW-1185">Reference proteome</keyword>
<keyword id="KW-0687">Ribonucleoprotein</keyword>
<keyword id="KW-0689">Ribosomal protein</keyword>
<gene>
    <name evidence="1" type="primary">rpsB</name>
    <name type="ordered locus">SYNAS_15850</name>
    <name type="ORF">SYN_01032</name>
</gene>
<evidence type="ECO:0000255" key="1">
    <source>
        <dbReference type="HAMAP-Rule" id="MF_00291"/>
    </source>
</evidence>
<evidence type="ECO:0000256" key="2">
    <source>
        <dbReference type="SAM" id="MobiDB-lite"/>
    </source>
</evidence>
<evidence type="ECO:0000305" key="3"/>
<dbReference type="EMBL" id="CP000252">
    <property type="protein sequence ID" value="ABC77464.1"/>
    <property type="molecule type" value="Genomic_DNA"/>
</dbReference>
<dbReference type="RefSeq" id="WP_011417486.1">
    <property type="nucleotide sequence ID" value="NC_007759.1"/>
</dbReference>
<dbReference type="SMR" id="Q2LTQ7"/>
<dbReference type="FunCoup" id="Q2LTQ7">
    <property type="interactions" value="644"/>
</dbReference>
<dbReference type="STRING" id="56780.SYN_01032"/>
<dbReference type="KEGG" id="sat:SYN_01032"/>
<dbReference type="eggNOG" id="COG0052">
    <property type="taxonomic scope" value="Bacteria"/>
</dbReference>
<dbReference type="HOGENOM" id="CLU_040318_1_2_7"/>
<dbReference type="InParanoid" id="Q2LTQ7"/>
<dbReference type="OrthoDB" id="9808036at2"/>
<dbReference type="Proteomes" id="UP000001933">
    <property type="component" value="Chromosome"/>
</dbReference>
<dbReference type="GO" id="GO:0022627">
    <property type="term" value="C:cytosolic small ribosomal subunit"/>
    <property type="evidence" value="ECO:0007669"/>
    <property type="project" value="TreeGrafter"/>
</dbReference>
<dbReference type="GO" id="GO:0003735">
    <property type="term" value="F:structural constituent of ribosome"/>
    <property type="evidence" value="ECO:0007669"/>
    <property type="project" value="InterPro"/>
</dbReference>
<dbReference type="GO" id="GO:0006412">
    <property type="term" value="P:translation"/>
    <property type="evidence" value="ECO:0007669"/>
    <property type="project" value="UniProtKB-UniRule"/>
</dbReference>
<dbReference type="CDD" id="cd01425">
    <property type="entry name" value="RPS2"/>
    <property type="match status" value="1"/>
</dbReference>
<dbReference type="FunFam" id="1.10.287.610:FF:000001">
    <property type="entry name" value="30S ribosomal protein S2"/>
    <property type="match status" value="1"/>
</dbReference>
<dbReference type="Gene3D" id="3.40.50.10490">
    <property type="entry name" value="Glucose-6-phosphate isomerase like protein, domain 1"/>
    <property type="match status" value="1"/>
</dbReference>
<dbReference type="Gene3D" id="1.10.287.610">
    <property type="entry name" value="Helix hairpin bin"/>
    <property type="match status" value="1"/>
</dbReference>
<dbReference type="HAMAP" id="MF_00291_B">
    <property type="entry name" value="Ribosomal_uS2_B"/>
    <property type="match status" value="1"/>
</dbReference>
<dbReference type="InterPro" id="IPR001865">
    <property type="entry name" value="Ribosomal_uS2"/>
</dbReference>
<dbReference type="InterPro" id="IPR005706">
    <property type="entry name" value="Ribosomal_uS2_bac/mit/plastid"/>
</dbReference>
<dbReference type="InterPro" id="IPR018130">
    <property type="entry name" value="Ribosomal_uS2_CS"/>
</dbReference>
<dbReference type="InterPro" id="IPR023591">
    <property type="entry name" value="Ribosomal_uS2_flav_dom_sf"/>
</dbReference>
<dbReference type="NCBIfam" id="TIGR01011">
    <property type="entry name" value="rpsB_bact"/>
    <property type="match status" value="1"/>
</dbReference>
<dbReference type="PANTHER" id="PTHR12534">
    <property type="entry name" value="30S RIBOSOMAL PROTEIN S2 PROKARYOTIC AND ORGANELLAR"/>
    <property type="match status" value="1"/>
</dbReference>
<dbReference type="PANTHER" id="PTHR12534:SF0">
    <property type="entry name" value="SMALL RIBOSOMAL SUBUNIT PROTEIN US2M"/>
    <property type="match status" value="1"/>
</dbReference>
<dbReference type="Pfam" id="PF00318">
    <property type="entry name" value="Ribosomal_S2"/>
    <property type="match status" value="1"/>
</dbReference>
<dbReference type="PRINTS" id="PR00395">
    <property type="entry name" value="RIBOSOMALS2"/>
</dbReference>
<dbReference type="SUPFAM" id="SSF52313">
    <property type="entry name" value="Ribosomal protein S2"/>
    <property type="match status" value="1"/>
</dbReference>
<dbReference type="PROSITE" id="PS00962">
    <property type="entry name" value="RIBOSOMAL_S2_1"/>
    <property type="match status" value="1"/>
</dbReference>
<dbReference type="PROSITE" id="PS00963">
    <property type="entry name" value="RIBOSOMAL_S2_2"/>
    <property type="match status" value="1"/>
</dbReference>
<protein>
    <recommendedName>
        <fullName evidence="1">Small ribosomal subunit protein uS2</fullName>
    </recommendedName>
    <alternativeName>
        <fullName evidence="3">30S ribosomal protein S2</fullName>
    </alternativeName>
</protein>
<organism>
    <name type="scientific">Syntrophus aciditrophicus (strain SB)</name>
    <dbReference type="NCBI Taxonomy" id="56780"/>
    <lineage>
        <taxon>Bacteria</taxon>
        <taxon>Pseudomonadati</taxon>
        <taxon>Thermodesulfobacteriota</taxon>
        <taxon>Syntrophia</taxon>
        <taxon>Syntrophales</taxon>
        <taxon>Syntrophaceae</taxon>
        <taxon>Syntrophus</taxon>
    </lineage>
</organism>
<accession>Q2LTQ7</accession>
<feature type="chain" id="PRO_1000004098" description="Small ribosomal subunit protein uS2">
    <location>
        <begin position="1"/>
        <end position="277"/>
    </location>
</feature>
<feature type="region of interest" description="Disordered" evidence="2">
    <location>
        <begin position="228"/>
        <end position="277"/>
    </location>
</feature>
<feature type="compositionally biased region" description="Basic and acidic residues" evidence="2">
    <location>
        <begin position="228"/>
        <end position="241"/>
    </location>
</feature>
<comment type="similarity">
    <text evidence="1">Belongs to the universal ribosomal protein uS2 family.</text>
</comment>
<name>RS2_SYNAS</name>